<organism>
    <name type="scientific">Edwardsiella ictaluri (strain 93-146)</name>
    <dbReference type="NCBI Taxonomy" id="634503"/>
    <lineage>
        <taxon>Bacteria</taxon>
        <taxon>Pseudomonadati</taxon>
        <taxon>Pseudomonadota</taxon>
        <taxon>Gammaproteobacteria</taxon>
        <taxon>Enterobacterales</taxon>
        <taxon>Hafniaceae</taxon>
        <taxon>Edwardsiella</taxon>
    </lineage>
</organism>
<dbReference type="EMBL" id="CP001600">
    <property type="protein sequence ID" value="ACR70726.1"/>
    <property type="molecule type" value="Genomic_DNA"/>
</dbReference>
<dbReference type="RefSeq" id="WP_012850033.1">
    <property type="nucleotide sequence ID" value="NZ_CP169062.1"/>
</dbReference>
<dbReference type="SMR" id="C5BGM9"/>
<dbReference type="STRING" id="67780.B6E78_09590"/>
<dbReference type="GeneID" id="72530005"/>
<dbReference type="KEGG" id="eic:NT01EI_3598"/>
<dbReference type="HOGENOM" id="CLU_072226_1_1_6"/>
<dbReference type="OrthoDB" id="9807653at2"/>
<dbReference type="Proteomes" id="UP000001485">
    <property type="component" value="Chromosome"/>
</dbReference>
<dbReference type="GO" id="GO:0015935">
    <property type="term" value="C:small ribosomal subunit"/>
    <property type="evidence" value="ECO:0007669"/>
    <property type="project" value="InterPro"/>
</dbReference>
<dbReference type="GO" id="GO:0019843">
    <property type="term" value="F:rRNA binding"/>
    <property type="evidence" value="ECO:0007669"/>
    <property type="project" value="UniProtKB-UniRule"/>
</dbReference>
<dbReference type="GO" id="GO:0003735">
    <property type="term" value="F:structural constituent of ribosome"/>
    <property type="evidence" value="ECO:0007669"/>
    <property type="project" value="InterPro"/>
</dbReference>
<dbReference type="GO" id="GO:0000049">
    <property type="term" value="F:tRNA binding"/>
    <property type="evidence" value="ECO:0007669"/>
    <property type="project" value="UniProtKB-UniRule"/>
</dbReference>
<dbReference type="GO" id="GO:0006412">
    <property type="term" value="P:translation"/>
    <property type="evidence" value="ECO:0007669"/>
    <property type="project" value="UniProtKB-UniRule"/>
</dbReference>
<dbReference type="CDD" id="cd14869">
    <property type="entry name" value="uS7_Bacteria"/>
    <property type="match status" value="1"/>
</dbReference>
<dbReference type="FunFam" id="1.10.455.10:FF:000001">
    <property type="entry name" value="30S ribosomal protein S7"/>
    <property type="match status" value="1"/>
</dbReference>
<dbReference type="Gene3D" id="1.10.455.10">
    <property type="entry name" value="Ribosomal protein S7 domain"/>
    <property type="match status" value="1"/>
</dbReference>
<dbReference type="HAMAP" id="MF_00480_B">
    <property type="entry name" value="Ribosomal_uS7_B"/>
    <property type="match status" value="1"/>
</dbReference>
<dbReference type="InterPro" id="IPR000235">
    <property type="entry name" value="Ribosomal_uS7"/>
</dbReference>
<dbReference type="InterPro" id="IPR005717">
    <property type="entry name" value="Ribosomal_uS7_bac/org-type"/>
</dbReference>
<dbReference type="InterPro" id="IPR020606">
    <property type="entry name" value="Ribosomal_uS7_CS"/>
</dbReference>
<dbReference type="InterPro" id="IPR023798">
    <property type="entry name" value="Ribosomal_uS7_dom"/>
</dbReference>
<dbReference type="InterPro" id="IPR036823">
    <property type="entry name" value="Ribosomal_uS7_dom_sf"/>
</dbReference>
<dbReference type="NCBIfam" id="TIGR01029">
    <property type="entry name" value="rpsG_bact"/>
    <property type="match status" value="1"/>
</dbReference>
<dbReference type="PANTHER" id="PTHR11205">
    <property type="entry name" value="RIBOSOMAL PROTEIN S7"/>
    <property type="match status" value="1"/>
</dbReference>
<dbReference type="Pfam" id="PF00177">
    <property type="entry name" value="Ribosomal_S7"/>
    <property type="match status" value="1"/>
</dbReference>
<dbReference type="PIRSF" id="PIRSF002122">
    <property type="entry name" value="RPS7p_RPS7a_RPS5e_RPS7o"/>
    <property type="match status" value="1"/>
</dbReference>
<dbReference type="SUPFAM" id="SSF47973">
    <property type="entry name" value="Ribosomal protein S7"/>
    <property type="match status" value="1"/>
</dbReference>
<dbReference type="PROSITE" id="PS00052">
    <property type="entry name" value="RIBOSOMAL_S7"/>
    <property type="match status" value="1"/>
</dbReference>
<feature type="chain" id="PRO_1000206402" description="Small ribosomal subunit protein uS7">
    <location>
        <begin position="1"/>
        <end position="156"/>
    </location>
</feature>
<keyword id="KW-0687">Ribonucleoprotein</keyword>
<keyword id="KW-0689">Ribosomal protein</keyword>
<keyword id="KW-0694">RNA-binding</keyword>
<keyword id="KW-0699">rRNA-binding</keyword>
<keyword id="KW-0820">tRNA-binding</keyword>
<gene>
    <name evidence="1" type="primary">rpsG</name>
    <name type="ordered locus">NT01EI_3598</name>
</gene>
<proteinExistence type="inferred from homology"/>
<name>RS7_EDWI9</name>
<comment type="function">
    <text evidence="1">One of the primary rRNA binding proteins, it binds directly to 16S rRNA where it nucleates assembly of the head domain of the 30S subunit. Is located at the subunit interface close to the decoding center, probably blocks exit of the E-site tRNA.</text>
</comment>
<comment type="subunit">
    <text evidence="1">Part of the 30S ribosomal subunit. Contacts proteins S9 and S11.</text>
</comment>
<comment type="similarity">
    <text evidence="1">Belongs to the universal ribosomal protein uS7 family.</text>
</comment>
<accession>C5BGM9</accession>
<reference key="1">
    <citation type="submission" date="2009-03" db="EMBL/GenBank/DDBJ databases">
        <title>Complete genome sequence of Edwardsiella ictaluri 93-146.</title>
        <authorList>
            <person name="Williams M.L."/>
            <person name="Gillaspy A.F."/>
            <person name="Dyer D.W."/>
            <person name="Thune R.L."/>
            <person name="Waldbieser G.C."/>
            <person name="Schuster S.C."/>
            <person name="Gipson J."/>
            <person name="Zaitshik J."/>
            <person name="Landry C."/>
            <person name="Lawrence M.L."/>
        </authorList>
    </citation>
    <scope>NUCLEOTIDE SEQUENCE [LARGE SCALE GENOMIC DNA]</scope>
    <source>
        <strain>93-146</strain>
    </source>
</reference>
<evidence type="ECO:0000255" key="1">
    <source>
        <dbReference type="HAMAP-Rule" id="MF_00480"/>
    </source>
</evidence>
<evidence type="ECO:0000305" key="2"/>
<protein>
    <recommendedName>
        <fullName evidence="1">Small ribosomal subunit protein uS7</fullName>
    </recommendedName>
    <alternativeName>
        <fullName evidence="2">30S ribosomal protein S7</fullName>
    </alternativeName>
</protein>
<sequence length="156" mass="17620">MPRRRVIGQRKILPDPKFGSELLAKFVNILMVDGKKSTAESIVYSALETLAQRSGKTELEAFETALENVRPTVEVKSRRVGGSTYQVPVEVRPVRRNALAMRWIVEAARKRGDKSMALRLANELSDAAENKGTAVKKREDVHRMAEANKAFAHYRW</sequence>